<keyword id="KW-0028">Amino-acid biosynthesis</keyword>
<keyword id="KW-0061">Asparagine biosynthesis</keyword>
<keyword id="KW-0067">ATP-binding</keyword>
<keyword id="KW-0963">Cytoplasm</keyword>
<keyword id="KW-0436">Ligase</keyword>
<keyword id="KW-0547">Nucleotide-binding</keyword>
<keyword id="KW-1185">Reference proteome</keyword>
<protein>
    <recommendedName>
        <fullName evidence="1">Aspartate--ammonia ligase</fullName>
        <ecNumber evidence="1">6.3.1.1</ecNumber>
    </recommendedName>
    <alternativeName>
        <fullName evidence="1">Asparagine synthetase A</fullName>
    </alternativeName>
</protein>
<name>ASNA_LIGS1</name>
<dbReference type="EC" id="6.3.1.1" evidence="1"/>
<dbReference type="EMBL" id="CP000233">
    <property type="protein sequence ID" value="ABD99841.1"/>
    <property type="molecule type" value="Genomic_DNA"/>
</dbReference>
<dbReference type="RefSeq" id="WP_011476128.1">
    <property type="nucleotide sequence ID" value="NC_007929.1"/>
</dbReference>
<dbReference type="RefSeq" id="YP_535924.1">
    <property type="nucleotide sequence ID" value="NC_007929.1"/>
</dbReference>
<dbReference type="SMR" id="Q1WTD6"/>
<dbReference type="STRING" id="362948.LSL_1033"/>
<dbReference type="KEGG" id="lsl:LSL_1033"/>
<dbReference type="PATRIC" id="fig|362948.14.peg.1106"/>
<dbReference type="HOGENOM" id="CLU_071543_0_0_9"/>
<dbReference type="OrthoDB" id="9766088at2"/>
<dbReference type="UniPathway" id="UPA00134">
    <property type="reaction ID" value="UER00194"/>
</dbReference>
<dbReference type="Proteomes" id="UP000006559">
    <property type="component" value="Chromosome"/>
</dbReference>
<dbReference type="GO" id="GO:0005829">
    <property type="term" value="C:cytosol"/>
    <property type="evidence" value="ECO:0007669"/>
    <property type="project" value="TreeGrafter"/>
</dbReference>
<dbReference type="GO" id="GO:0004071">
    <property type="term" value="F:aspartate-ammonia ligase activity"/>
    <property type="evidence" value="ECO:0007669"/>
    <property type="project" value="UniProtKB-UniRule"/>
</dbReference>
<dbReference type="GO" id="GO:0005524">
    <property type="term" value="F:ATP binding"/>
    <property type="evidence" value="ECO:0007669"/>
    <property type="project" value="UniProtKB-UniRule"/>
</dbReference>
<dbReference type="GO" id="GO:0140096">
    <property type="term" value="F:catalytic activity, acting on a protein"/>
    <property type="evidence" value="ECO:0007669"/>
    <property type="project" value="UniProtKB-ARBA"/>
</dbReference>
<dbReference type="GO" id="GO:0016740">
    <property type="term" value="F:transferase activity"/>
    <property type="evidence" value="ECO:0007669"/>
    <property type="project" value="UniProtKB-ARBA"/>
</dbReference>
<dbReference type="GO" id="GO:0070981">
    <property type="term" value="P:L-asparagine biosynthetic process"/>
    <property type="evidence" value="ECO:0007669"/>
    <property type="project" value="UniProtKB-UniRule"/>
</dbReference>
<dbReference type="CDD" id="cd00645">
    <property type="entry name" value="AsnA"/>
    <property type="match status" value="1"/>
</dbReference>
<dbReference type="Gene3D" id="3.30.930.10">
    <property type="entry name" value="Bira Bifunctional Protein, Domain 2"/>
    <property type="match status" value="1"/>
</dbReference>
<dbReference type="HAMAP" id="MF_00555">
    <property type="entry name" value="AsnA"/>
    <property type="match status" value="1"/>
</dbReference>
<dbReference type="InterPro" id="IPR006195">
    <property type="entry name" value="aa-tRNA-synth_II"/>
</dbReference>
<dbReference type="InterPro" id="IPR045864">
    <property type="entry name" value="aa-tRNA-synth_II/BPL/LPL"/>
</dbReference>
<dbReference type="InterPro" id="IPR004618">
    <property type="entry name" value="AsnA"/>
</dbReference>
<dbReference type="NCBIfam" id="TIGR00669">
    <property type="entry name" value="asnA"/>
    <property type="match status" value="1"/>
</dbReference>
<dbReference type="PANTHER" id="PTHR30073">
    <property type="entry name" value="ASPARTATE--AMMONIA LIGASE"/>
    <property type="match status" value="1"/>
</dbReference>
<dbReference type="PANTHER" id="PTHR30073:SF5">
    <property type="entry name" value="ASPARTATE--AMMONIA LIGASE"/>
    <property type="match status" value="1"/>
</dbReference>
<dbReference type="Pfam" id="PF03590">
    <property type="entry name" value="AsnA"/>
    <property type="match status" value="1"/>
</dbReference>
<dbReference type="PIRSF" id="PIRSF001555">
    <property type="entry name" value="Asp_ammon_ligase"/>
    <property type="match status" value="1"/>
</dbReference>
<dbReference type="SUPFAM" id="SSF55681">
    <property type="entry name" value="Class II aaRS and biotin synthetases"/>
    <property type="match status" value="1"/>
</dbReference>
<dbReference type="PROSITE" id="PS50862">
    <property type="entry name" value="AA_TRNA_LIGASE_II"/>
    <property type="match status" value="1"/>
</dbReference>
<accession>Q1WTD6</accession>
<proteinExistence type="inferred from homology"/>
<gene>
    <name evidence="1" type="primary">asnA</name>
    <name type="ordered locus">LSL_1033</name>
</gene>
<sequence length="336" mass="39133">MDLIIPKDYDPKLSIRETQEAIRYIRETFQDEFGKEMGLNRVSAPMYVEKSSGINDNLNGYEKPVSFTMKDMPGETIEVVHSLAKWKRMALKKYGFGLHEGLYTNMNAIRKDEDLDNFHSSYVDQWDWEKVISKDERNEKTLKETVELIFKVVKHMEHEVWYKFPNAVYHLPDKIHFITSQELEDKYPELEDAKDRENAICKELGCVFVMQIGDVLKSGKRHDGRAPDYDDWKLNGDILFWYEPLQCALELSSMGIRVDEDSMVEQLKKTGDEDRLKLQYHKMILNKELPYTIGGGIGQSRLCMLLLGKAHVGEVQASIWPDEMLKKCEENGIHIL</sequence>
<feature type="chain" id="PRO_1000017953" description="Aspartate--ammonia ligase">
    <location>
        <begin position="1"/>
        <end position="336"/>
    </location>
</feature>
<evidence type="ECO:0000255" key="1">
    <source>
        <dbReference type="HAMAP-Rule" id="MF_00555"/>
    </source>
</evidence>
<comment type="catalytic activity">
    <reaction evidence="1">
        <text>L-aspartate + NH4(+) + ATP = L-asparagine + AMP + diphosphate + H(+)</text>
        <dbReference type="Rhea" id="RHEA:11372"/>
        <dbReference type="ChEBI" id="CHEBI:15378"/>
        <dbReference type="ChEBI" id="CHEBI:28938"/>
        <dbReference type="ChEBI" id="CHEBI:29991"/>
        <dbReference type="ChEBI" id="CHEBI:30616"/>
        <dbReference type="ChEBI" id="CHEBI:33019"/>
        <dbReference type="ChEBI" id="CHEBI:58048"/>
        <dbReference type="ChEBI" id="CHEBI:456215"/>
        <dbReference type="EC" id="6.3.1.1"/>
    </reaction>
</comment>
<comment type="pathway">
    <text evidence="1">Amino-acid biosynthesis; L-asparagine biosynthesis; L-asparagine from L-aspartate (ammonia route): step 1/1.</text>
</comment>
<comment type="subcellular location">
    <subcellularLocation>
        <location evidence="1">Cytoplasm</location>
    </subcellularLocation>
</comment>
<comment type="similarity">
    <text evidence="1">Belongs to the class-II aminoacyl-tRNA synthetase family. AsnA subfamily.</text>
</comment>
<organism>
    <name type="scientific">Ligilactobacillus salivarius (strain UCC118)</name>
    <name type="common">Lactobacillus salivarius</name>
    <dbReference type="NCBI Taxonomy" id="362948"/>
    <lineage>
        <taxon>Bacteria</taxon>
        <taxon>Bacillati</taxon>
        <taxon>Bacillota</taxon>
        <taxon>Bacilli</taxon>
        <taxon>Lactobacillales</taxon>
        <taxon>Lactobacillaceae</taxon>
        <taxon>Ligilactobacillus</taxon>
    </lineage>
</organism>
<reference key="1">
    <citation type="journal article" date="2006" name="Proc. Natl. Acad. Sci. U.S.A.">
        <title>Multireplicon genome architecture of Lactobacillus salivarius.</title>
        <authorList>
            <person name="Claesson M.J."/>
            <person name="Li Y."/>
            <person name="Leahy S."/>
            <person name="Canchaya C."/>
            <person name="van Pijkeren J.P."/>
            <person name="Cerdeno-Tarraga A.M."/>
            <person name="Parkhill J."/>
            <person name="Flynn S."/>
            <person name="O'Sullivan G.C."/>
            <person name="Collins J.K."/>
            <person name="Higgins D."/>
            <person name="Shanahan F."/>
            <person name="Fitzgerald G.F."/>
            <person name="van Sinderen D."/>
            <person name="O'Toole P.W."/>
        </authorList>
    </citation>
    <scope>NUCLEOTIDE SEQUENCE [LARGE SCALE GENOMIC DNA]</scope>
    <source>
        <strain>UCC118</strain>
    </source>
</reference>